<accession>P60616</accession>
<accession>P01378</accession>
<accession>Q90WK0</accession>
<accession>Q9PRI7</accession>
<accession>Q9W726</accession>
<accession>Q9W797</accession>
<accession>Q9YI08</accession>
<comment type="function">
    <text evidence="2 3">Binds with high affinity to muscular (alpha-1/CHRNA1) and neuronal (alpha-7/CHRNA7) nicotinic acetylcholine receptor (nAChR) and inhibits acetylcholine from binding to the receptor, thereby impairing neuromuscular and neuronal transmission.</text>
</comment>
<comment type="subunit">
    <text evidence="1">Monomer in solution, homodimer in crystal state.</text>
</comment>
<comment type="interaction">
    <interactant intactId="EBI-16123259">
        <id>P60616</id>
    </interactant>
    <interactant intactId="EBI-9008641">
        <id>Q9UGM1</id>
        <label>CHRNA9</label>
    </interactant>
    <organismsDiffer>true</organismsDiffer>
    <experiments>2</experiments>
</comment>
<comment type="subcellular location">
    <subcellularLocation>
        <location evidence="5">Secreted</location>
    </subcellularLocation>
</comment>
<comment type="tissue specificity">
    <text evidence="6">Expressed by the venom gland.</text>
</comment>
<comment type="similarity">
    <text evidence="6">Belongs to the three-finger toxin family. Long-chain subfamily. Type II alpha-neurotoxin sub-subfamily.</text>
</comment>
<comment type="caution">
    <text evidence="6">PubMed:9837992 indicates that a number of mRNA with sequence conflict(s) are produced by RNA editing. This seems not to be the case as discussed in PubMed:10497260.</text>
</comment>
<name>3L21V_BUNMU</name>
<feature type="signal peptide" evidence="5">
    <location>
        <begin position="1"/>
        <end position="21"/>
    </location>
</feature>
<feature type="chain" id="PRO_0000035407" description="Alpha-bungarotoxin isoform V31">
    <location>
        <begin position="22"/>
        <end position="95"/>
    </location>
</feature>
<feature type="disulfide bond" evidence="4">
    <location>
        <begin position="24"/>
        <end position="44"/>
    </location>
</feature>
<feature type="disulfide bond" evidence="4">
    <location>
        <begin position="37"/>
        <end position="65"/>
    </location>
</feature>
<feature type="disulfide bond" evidence="4">
    <location>
        <begin position="50"/>
        <end position="54"/>
    </location>
</feature>
<feature type="disulfide bond" evidence="4">
    <location>
        <begin position="69"/>
        <end position="80"/>
    </location>
</feature>
<feature type="disulfide bond" evidence="4">
    <location>
        <begin position="81"/>
        <end position="86"/>
    </location>
</feature>
<feature type="sequence conflict" description="In Ref. 3; AAD41805." evidence="6" ref="3">
    <original>MK</original>
    <variation>MMT</variation>
    <location>
        <begin position="1"/>
        <end position="2"/>
    </location>
</feature>
<feature type="sequence conflict" description="In Ref. 5; AAC83995." evidence="6" ref="5">
    <original>F</original>
    <variation>S</variation>
    <location>
        <position position="53"/>
    </location>
</feature>
<feature type="sequence conflict" description="In Ref. 3; AAD41805." evidence="6" ref="3">
    <original>K</original>
    <variation>R</variation>
    <location>
        <position position="85"/>
    </location>
</feature>
<feature type="strand" evidence="7">
    <location>
        <begin position="23"/>
        <end position="26"/>
    </location>
</feature>
<feature type="strand" evidence="7">
    <location>
        <begin position="29"/>
        <end position="31"/>
    </location>
</feature>
<feature type="strand" evidence="7">
    <location>
        <begin position="33"/>
        <end position="36"/>
    </location>
</feature>
<feature type="strand" evidence="7">
    <location>
        <begin position="43"/>
        <end position="49"/>
    </location>
</feature>
<feature type="helix" evidence="7">
    <location>
        <begin position="54"/>
        <end position="57"/>
    </location>
</feature>
<feature type="strand" evidence="7">
    <location>
        <begin position="60"/>
        <end position="68"/>
    </location>
</feature>
<feature type="strand" evidence="7">
    <location>
        <begin position="77"/>
        <end position="81"/>
    </location>
</feature>
<evidence type="ECO:0000250" key="1"/>
<evidence type="ECO:0000250" key="2">
    <source>
        <dbReference type="UniProtKB" id="P60615"/>
    </source>
</evidence>
<evidence type="ECO:0000269" key="3">
    <source>
    </source>
</evidence>
<evidence type="ECO:0000269" key="4">
    <source>
    </source>
</evidence>
<evidence type="ECO:0000269" key="5">
    <source>
    </source>
</evidence>
<evidence type="ECO:0000305" key="6"/>
<evidence type="ECO:0007829" key="7">
    <source>
        <dbReference type="PDB" id="1HC9"/>
    </source>
</evidence>
<keyword id="KW-0002">3D-structure</keyword>
<keyword id="KW-0008">Acetylcholine receptor inhibiting toxin</keyword>
<keyword id="KW-0903">Direct protein sequencing</keyword>
<keyword id="KW-1015">Disulfide bond</keyword>
<keyword id="KW-0872">Ion channel impairing toxin</keyword>
<keyword id="KW-0528">Neurotoxin</keyword>
<keyword id="KW-0629">Postsynaptic neurotoxin</keyword>
<keyword id="KW-0964">Secreted</keyword>
<keyword id="KW-0732">Signal</keyword>
<keyword id="KW-0800">Toxin</keyword>
<reference key="1">
    <citation type="journal article" date="1999" name="Nucleic Acids Res.">
        <title>Genetic organization of alpha-bungarotoxins from Bungarus multicinctus (Taiwan banded krait): evidence showing that the production of alpha-bungarotoxin isotoxins is not derived from edited mRNAs.</title>
        <authorList>
            <person name="Chang L.-S."/>
            <person name="Lin S.-K."/>
            <person name="Huang H.-B."/>
            <person name="Hsiao M."/>
        </authorList>
    </citation>
    <scope>NUCLEOTIDE SEQUENCE [GENOMIC DNA / MRNA]</scope>
    <source>
        <tissue>Liver</tissue>
        <tissue>Venom gland</tissue>
    </source>
</reference>
<reference key="2">
    <citation type="submission" date="1998-07" db="EMBL/GenBank/DDBJ databases">
        <title>Molecular cloning of neurotoxin-like proteins from Bungarus multicinctus multicinctus.</title>
        <authorList>
            <person name="Qian Y.C."/>
            <person name="Fang C.Y."/>
            <person name="Gong Y."/>
            <person name="Yang S."/>
        </authorList>
    </citation>
    <scope>NUCLEOTIDE SEQUENCE [MRNA]</scope>
    <source>
        <tissue>Venom gland</tissue>
    </source>
</reference>
<reference key="3">
    <citation type="submission" date="1999-04" db="EMBL/GenBank/DDBJ databases">
        <authorList>
            <person name="Cai Q."/>
            <person name="He Z."/>
            <person name="Gong Y."/>
            <person name="Yang S."/>
        </authorList>
    </citation>
    <scope>NUCLEOTIDE SEQUENCE [MRNA]</scope>
    <source>
        <tissue>Venom gland</tissue>
    </source>
</reference>
<reference key="4">
    <citation type="journal article" date="1988" name="Biochemistry">
        <title>Structural studies of alpha-bungarotoxin. 3. Corrections in the primary sequence and X-ray structure and characterization of an isotoxic alpha-bungarotoxin.</title>
        <authorList>
            <person name="Kosen P.A."/>
            <person name="Finer-Moore J."/>
            <person name="McCarthy M.P."/>
            <person name="Basus V.J."/>
        </authorList>
    </citation>
    <scope>PROTEIN SEQUENCE OF 22-95</scope>
    <scope>SUBCELLULAR LOCATION</scope>
    <source>
        <tissue>Venom</tissue>
    </source>
</reference>
<reference key="5">
    <citation type="journal article" date="1998" name="Nucleic Acids Res.">
        <title>Genetic characterization of the mRNAs encoding alpha-bungarotoxin: isoforms and RNA editing in Bungarus multicinctus gland cells.</title>
        <authorList>
            <person name="Liu L.-F."/>
            <person name="Chang C.-C."/>
            <person name="Liau M.-Y."/>
            <person name="Kuo K.-W."/>
        </authorList>
    </citation>
    <scope>NUCLEOTIDE SEQUENCE [MRNA] OF 22-95</scope>
    <source>
        <tissue>Venom gland</tissue>
    </source>
</reference>
<reference key="6">
    <citation type="journal article" date="2001" name="Neuron">
        <title>The binding site of acetylcholine receptor as visualized in the X-ray structure of a complex between alpha-bungarotoxin and a mimotope peptide.</title>
        <authorList>
            <person name="Harel M."/>
            <person name="Kasher R."/>
            <person name="Nicolas A."/>
            <person name="Guss J.M."/>
            <person name="Balass M."/>
            <person name="Fridkin M."/>
            <person name="Smit A.B."/>
            <person name="Brejc K."/>
            <person name="Sixma T.K."/>
            <person name="Katchalski-Katzir E."/>
            <person name="Sussman J.L."/>
            <person name="Fuchs S."/>
        </authorList>
    </citation>
    <scope>X-RAY CRYSTALLOGRAPHY (1.8 ANGSTROMS) OF 22-95 IN COMPLEX WITH A 13-RESIDUE PEPTIDE HOMOLOGOUS TO THE BINDING REGION OF THE ALPHA SUBUNIT OF ACETYLCHOLINE RECEPTOR</scope>
    <scope>DISULFIDE BONDS</scope>
</reference>
<sequence length="95" mass="10313">MKTLLLTLVVVTIVCLDLGYTIVCHTTATSPISAVTCPPGENLCYRKMWCDVFCSSRGKVVELGCAATCPSKKPYEEVTCCSTDKCNPHPKQRPG</sequence>
<dbReference type="EMBL" id="Y17693">
    <property type="protein sequence ID" value="CAB51843.1"/>
    <property type="molecule type" value="Genomic_DNA"/>
</dbReference>
<dbReference type="EMBL" id="Y17057">
    <property type="protein sequence ID" value="CAB51841.1"/>
    <property type="molecule type" value="mRNA"/>
</dbReference>
<dbReference type="EMBL" id="AJ007766">
    <property type="protein sequence ID" value="CAB50692.1"/>
    <property type="molecule type" value="mRNA"/>
</dbReference>
<dbReference type="EMBL" id="AF142323">
    <property type="protein sequence ID" value="AAD41805.1"/>
    <property type="molecule type" value="mRNA"/>
</dbReference>
<dbReference type="EMBL" id="AF056414">
    <property type="protein sequence ID" value="AAC83995.1"/>
    <property type="molecule type" value="mRNA"/>
</dbReference>
<dbReference type="EMBL" id="AF056417">
    <property type="protein sequence ID" value="AAC83998.1"/>
    <property type="molecule type" value="mRNA"/>
</dbReference>
<dbReference type="PDB" id="1HC9">
    <property type="method" value="X-ray"/>
    <property type="resolution" value="1.80 A"/>
    <property type="chains" value="A=22-95"/>
</dbReference>
<dbReference type="PDB" id="2QC1">
    <property type="method" value="X-ray"/>
    <property type="resolution" value="1.94 A"/>
    <property type="chains" value="A=22-95"/>
</dbReference>
<dbReference type="PDB" id="4HQP">
    <property type="method" value="X-ray"/>
    <property type="resolution" value="3.51 A"/>
    <property type="chains" value="F/G/H/I/J=22-94"/>
</dbReference>
<dbReference type="PDB" id="4UY2">
    <property type="method" value="X-ray"/>
    <property type="resolution" value="2.70 A"/>
    <property type="chains" value="C/D=22-95"/>
</dbReference>
<dbReference type="PDB" id="5HBT">
    <property type="method" value="X-ray"/>
    <property type="resolution" value="2.61 A"/>
    <property type="chains" value="A=22-95"/>
</dbReference>
<dbReference type="PDB" id="5HBV">
    <property type="method" value="X-ray"/>
    <property type="resolution" value="2.70 A"/>
    <property type="chains" value="A=22-95"/>
</dbReference>
<dbReference type="PDB" id="7KOO">
    <property type="method" value="EM"/>
    <property type="resolution" value="3.00 A"/>
    <property type="chains" value="F/G/H/I/J=22-92"/>
</dbReference>
<dbReference type="PDB" id="8VY8">
    <property type="method" value="X-ray"/>
    <property type="resolution" value="2.40 A"/>
    <property type="chains" value="A/B/E/G=22-95"/>
</dbReference>
<dbReference type="PDBsum" id="1HC9"/>
<dbReference type="PDBsum" id="2QC1"/>
<dbReference type="PDBsum" id="4HQP"/>
<dbReference type="PDBsum" id="4UY2"/>
<dbReference type="PDBsum" id="5HBT"/>
<dbReference type="PDBsum" id="5HBV"/>
<dbReference type="PDBsum" id="7KOO"/>
<dbReference type="PDBsum" id="8VY8"/>
<dbReference type="BMRB" id="P60616"/>
<dbReference type="EMDB" id="EMD-22979"/>
<dbReference type="PCDDB" id="P60616"/>
<dbReference type="SMR" id="P60616"/>
<dbReference type="DIP" id="DIP-61054N"/>
<dbReference type="IntAct" id="P60616">
    <property type="interactions" value="1"/>
</dbReference>
<dbReference type="EvolutionaryTrace" id="P60616"/>
<dbReference type="GO" id="GO:0005576">
    <property type="term" value="C:extracellular region"/>
    <property type="evidence" value="ECO:0007669"/>
    <property type="project" value="UniProtKB-SubCell"/>
</dbReference>
<dbReference type="GO" id="GO:0030550">
    <property type="term" value="F:acetylcholine receptor inhibitor activity"/>
    <property type="evidence" value="ECO:0007669"/>
    <property type="project" value="UniProtKB-KW"/>
</dbReference>
<dbReference type="GO" id="GO:0099106">
    <property type="term" value="F:ion channel regulator activity"/>
    <property type="evidence" value="ECO:0007669"/>
    <property type="project" value="UniProtKB-KW"/>
</dbReference>
<dbReference type="GO" id="GO:0090729">
    <property type="term" value="F:toxin activity"/>
    <property type="evidence" value="ECO:0007669"/>
    <property type="project" value="UniProtKB-KW"/>
</dbReference>
<dbReference type="CDD" id="cd00206">
    <property type="entry name" value="TFP_snake_toxin"/>
    <property type="match status" value="1"/>
</dbReference>
<dbReference type="Gene3D" id="2.10.60.10">
    <property type="entry name" value="CD59"/>
    <property type="match status" value="1"/>
</dbReference>
<dbReference type="InterPro" id="IPR003571">
    <property type="entry name" value="Snake_3FTx"/>
</dbReference>
<dbReference type="InterPro" id="IPR045860">
    <property type="entry name" value="Snake_toxin-like_sf"/>
</dbReference>
<dbReference type="InterPro" id="IPR018354">
    <property type="entry name" value="Snake_toxin_con_site"/>
</dbReference>
<dbReference type="InterPro" id="IPR054131">
    <property type="entry name" value="Toxin_cobra-type"/>
</dbReference>
<dbReference type="Pfam" id="PF21947">
    <property type="entry name" value="Toxin_cobra-type"/>
    <property type="match status" value="1"/>
</dbReference>
<dbReference type="SUPFAM" id="SSF57302">
    <property type="entry name" value="Snake toxin-like"/>
    <property type="match status" value="1"/>
</dbReference>
<dbReference type="PROSITE" id="PS00272">
    <property type="entry name" value="SNAKE_TOXIN"/>
    <property type="match status" value="1"/>
</dbReference>
<protein>
    <recommendedName>
        <fullName>Alpha-bungarotoxin isoform V31</fullName>
        <shortName>Alpha-BTX V31</shortName>
        <shortName>Alpha-Bgt(V31)</shortName>
        <shortName>BGTX V31</shortName>
    </recommendedName>
    <alternativeName>
        <fullName>Long neurotoxin 1</fullName>
    </alternativeName>
</protein>
<proteinExistence type="evidence at protein level"/>
<organism>
    <name type="scientific">Bungarus multicinctus</name>
    <name type="common">Many-banded krait</name>
    <dbReference type="NCBI Taxonomy" id="8616"/>
    <lineage>
        <taxon>Eukaryota</taxon>
        <taxon>Metazoa</taxon>
        <taxon>Chordata</taxon>
        <taxon>Craniata</taxon>
        <taxon>Vertebrata</taxon>
        <taxon>Euteleostomi</taxon>
        <taxon>Lepidosauria</taxon>
        <taxon>Squamata</taxon>
        <taxon>Bifurcata</taxon>
        <taxon>Unidentata</taxon>
        <taxon>Episquamata</taxon>
        <taxon>Toxicofera</taxon>
        <taxon>Serpentes</taxon>
        <taxon>Colubroidea</taxon>
        <taxon>Elapidae</taxon>
        <taxon>Bungarinae</taxon>
        <taxon>Bungarus</taxon>
    </lineage>
</organism>